<accession>C6DJM6</accession>
<name>KPTA_PECCP</name>
<protein>
    <recommendedName>
        <fullName evidence="1">Probable RNA 2'-phosphotransferase</fullName>
        <ecNumber evidence="1">2.7.1.-</ecNumber>
    </recommendedName>
</protein>
<sequence>MSNTKHADVSKFLSYVLRHKPEAIGLTLNSGGWANIAELISCAAKDGRLLTREVIQSVVDNSDKKRFSISADGLSIRAAQGHSSAQVDMRYEPKVPPEFLYHGTATRFIDSINQQGLRPGSRQYVHLSADEATAITVGQRHGKPTVLKIKTLEMHQQGFIFYQADNGVWLTLTVPVPFIDSTPFID</sequence>
<proteinExistence type="inferred from homology"/>
<keyword id="KW-0520">NAD</keyword>
<keyword id="KW-0808">Transferase</keyword>
<comment type="function">
    <text evidence="1">Removes the 2'-phosphate from RNA via an intermediate in which the phosphate is ADP-ribosylated by NAD followed by a presumed transesterification to release the RNA and generate ADP-ribose 1''-2''-cyclic phosphate (APPR&gt;P). May function as an ADP-ribosylase.</text>
</comment>
<comment type="similarity">
    <text evidence="1">Belongs to the KptA/TPT1 family.</text>
</comment>
<feature type="chain" id="PRO_1000204944" description="Probable RNA 2'-phosphotransferase">
    <location>
        <begin position="1"/>
        <end position="186"/>
    </location>
</feature>
<organism>
    <name type="scientific">Pectobacterium carotovorum subsp. carotovorum (strain PC1)</name>
    <dbReference type="NCBI Taxonomy" id="561230"/>
    <lineage>
        <taxon>Bacteria</taxon>
        <taxon>Pseudomonadati</taxon>
        <taxon>Pseudomonadota</taxon>
        <taxon>Gammaproteobacteria</taxon>
        <taxon>Enterobacterales</taxon>
        <taxon>Pectobacteriaceae</taxon>
        <taxon>Pectobacterium</taxon>
    </lineage>
</organism>
<dbReference type="EC" id="2.7.1.-" evidence="1"/>
<dbReference type="EMBL" id="CP001657">
    <property type="protein sequence ID" value="ACT11439.1"/>
    <property type="molecule type" value="Genomic_DNA"/>
</dbReference>
<dbReference type="RefSeq" id="WP_012773096.1">
    <property type="nucleotide sequence ID" value="NC_012917.1"/>
</dbReference>
<dbReference type="SMR" id="C6DJM6"/>
<dbReference type="STRING" id="561230.PC1_0381"/>
<dbReference type="KEGG" id="pct:PC1_0381"/>
<dbReference type="eggNOG" id="COG1859">
    <property type="taxonomic scope" value="Bacteria"/>
</dbReference>
<dbReference type="HOGENOM" id="CLU_052998_4_0_6"/>
<dbReference type="OrthoDB" id="4537997at2"/>
<dbReference type="Proteomes" id="UP000002736">
    <property type="component" value="Chromosome"/>
</dbReference>
<dbReference type="GO" id="GO:0003950">
    <property type="term" value="F:NAD+ poly-ADP-ribosyltransferase activity"/>
    <property type="evidence" value="ECO:0007669"/>
    <property type="project" value="InterPro"/>
</dbReference>
<dbReference type="GO" id="GO:0000215">
    <property type="term" value="F:tRNA 2'-phosphotransferase activity"/>
    <property type="evidence" value="ECO:0007669"/>
    <property type="project" value="TreeGrafter"/>
</dbReference>
<dbReference type="GO" id="GO:0006388">
    <property type="term" value="P:tRNA splicing, via endonucleolytic cleavage and ligation"/>
    <property type="evidence" value="ECO:0007669"/>
    <property type="project" value="UniProtKB-UniRule"/>
</dbReference>
<dbReference type="Gene3D" id="3.20.170.30">
    <property type="match status" value="1"/>
</dbReference>
<dbReference type="Gene3D" id="1.10.10.970">
    <property type="entry name" value="RNA 2'-phosphotransferase, Tpt1/KptA family, N-terminal domain"/>
    <property type="match status" value="1"/>
</dbReference>
<dbReference type="HAMAP" id="MF_00299">
    <property type="entry name" value="KptA"/>
    <property type="match status" value="1"/>
</dbReference>
<dbReference type="InterPro" id="IPR002745">
    <property type="entry name" value="Ptrans_KptA/Tpt1"/>
</dbReference>
<dbReference type="InterPro" id="IPR042081">
    <property type="entry name" value="RNA_2'-PTrans_C"/>
</dbReference>
<dbReference type="InterPro" id="IPR022928">
    <property type="entry name" value="RNA_2'-PTrans_KptA"/>
</dbReference>
<dbReference type="InterPro" id="IPR042080">
    <property type="entry name" value="RNA_2'-PTrans_N"/>
</dbReference>
<dbReference type="NCBIfam" id="NF002012">
    <property type="entry name" value="PRK00819.1-1"/>
    <property type="match status" value="1"/>
</dbReference>
<dbReference type="NCBIfam" id="NF002014">
    <property type="entry name" value="PRK00819.1-4"/>
    <property type="match status" value="1"/>
</dbReference>
<dbReference type="PANTHER" id="PTHR12684">
    <property type="entry name" value="PUTATIVE PHOSPHOTRANSFERASE"/>
    <property type="match status" value="1"/>
</dbReference>
<dbReference type="PANTHER" id="PTHR12684:SF2">
    <property type="entry name" value="TRNA 2'-PHOSPHOTRANSFERASE 1"/>
    <property type="match status" value="1"/>
</dbReference>
<dbReference type="Pfam" id="PF01885">
    <property type="entry name" value="PTS_2-RNA"/>
    <property type="match status" value="1"/>
</dbReference>
<dbReference type="SUPFAM" id="SSF56399">
    <property type="entry name" value="ADP-ribosylation"/>
    <property type="match status" value="1"/>
</dbReference>
<gene>
    <name evidence="1" type="primary">kptA</name>
    <name type="ordered locus">PC1_0381</name>
</gene>
<reference key="1">
    <citation type="submission" date="2009-07" db="EMBL/GenBank/DDBJ databases">
        <title>Complete sequence of Pectobacterium carotovorum subsp. carotovorum PC1.</title>
        <authorList>
            <consortium name="US DOE Joint Genome Institute"/>
            <person name="Lucas S."/>
            <person name="Copeland A."/>
            <person name="Lapidus A."/>
            <person name="Glavina del Rio T."/>
            <person name="Tice H."/>
            <person name="Bruce D."/>
            <person name="Goodwin L."/>
            <person name="Pitluck S."/>
            <person name="Munk A.C."/>
            <person name="Brettin T."/>
            <person name="Detter J.C."/>
            <person name="Han C."/>
            <person name="Tapia R."/>
            <person name="Larimer F."/>
            <person name="Land M."/>
            <person name="Hauser L."/>
            <person name="Kyrpides N."/>
            <person name="Mikhailova N."/>
            <person name="Balakrishnan V."/>
            <person name="Glasner J."/>
            <person name="Perna N.T."/>
        </authorList>
    </citation>
    <scope>NUCLEOTIDE SEQUENCE [LARGE SCALE GENOMIC DNA]</scope>
    <source>
        <strain>PC1</strain>
    </source>
</reference>
<evidence type="ECO:0000255" key="1">
    <source>
        <dbReference type="HAMAP-Rule" id="MF_00299"/>
    </source>
</evidence>